<feature type="chain" id="PRO_0000323514" description="7,8-didemethyl-8-hydroxy-5-deazariboflavin synthase">
    <location>
        <begin position="1"/>
        <end position="356"/>
    </location>
</feature>
<feature type="domain" description="Radical SAM core" evidence="2">
    <location>
        <begin position="40"/>
        <end position="280"/>
    </location>
</feature>
<feature type="binding site" evidence="1">
    <location>
        <position position="54"/>
    </location>
    <ligand>
        <name>[4Fe-4S] cluster</name>
        <dbReference type="ChEBI" id="CHEBI:49883"/>
        <note>4Fe-4S-S-AdoMet</note>
    </ligand>
</feature>
<feature type="binding site" evidence="1">
    <location>
        <position position="58"/>
    </location>
    <ligand>
        <name>[4Fe-4S] cluster</name>
        <dbReference type="ChEBI" id="CHEBI:49883"/>
        <note>4Fe-4S-S-AdoMet</note>
    </ligand>
</feature>
<feature type="binding site" evidence="1">
    <location>
        <position position="61"/>
    </location>
    <ligand>
        <name>[4Fe-4S] cluster</name>
        <dbReference type="ChEBI" id="CHEBI:49883"/>
        <note>4Fe-4S-S-AdoMet</note>
    </ligand>
</feature>
<evidence type="ECO:0000255" key="1">
    <source>
        <dbReference type="HAMAP-Rule" id="MF_01611"/>
    </source>
</evidence>
<evidence type="ECO:0000255" key="2">
    <source>
        <dbReference type="PROSITE-ProRule" id="PRU01266"/>
    </source>
</evidence>
<evidence type="ECO:0000305" key="3"/>
<dbReference type="EC" id="4.3.1.32" evidence="1"/>
<dbReference type="EMBL" id="CP000743">
    <property type="protein sequence ID" value="ABR56492.1"/>
    <property type="status" value="ALT_INIT"/>
    <property type="molecule type" value="Genomic_DNA"/>
</dbReference>
<dbReference type="RefSeq" id="WP_048062491.1">
    <property type="nucleotide sequence ID" value="NC_009635.1"/>
</dbReference>
<dbReference type="SMR" id="A6UVH0"/>
<dbReference type="STRING" id="419665.Maeo_0911"/>
<dbReference type="GeneID" id="5326597"/>
<dbReference type="KEGG" id="mae:Maeo_0911"/>
<dbReference type="eggNOG" id="arCOG00657">
    <property type="taxonomic scope" value="Archaea"/>
</dbReference>
<dbReference type="HOGENOM" id="CLU_054174_0_0_2"/>
<dbReference type="UniPathway" id="UPA00072"/>
<dbReference type="Proteomes" id="UP000001106">
    <property type="component" value="Chromosome"/>
</dbReference>
<dbReference type="GO" id="GO:0051539">
    <property type="term" value="F:4 iron, 4 sulfur cluster binding"/>
    <property type="evidence" value="ECO:0007669"/>
    <property type="project" value="UniProtKB-KW"/>
</dbReference>
<dbReference type="GO" id="GO:0044689">
    <property type="term" value="F:7,8-didemethyl-8-hydroxy-5-deazariboflavin synthase activity"/>
    <property type="evidence" value="ECO:0007669"/>
    <property type="project" value="UniProtKB-EC"/>
</dbReference>
<dbReference type="GO" id="GO:0005506">
    <property type="term" value="F:iron ion binding"/>
    <property type="evidence" value="ECO:0007669"/>
    <property type="project" value="UniProtKB-UniRule"/>
</dbReference>
<dbReference type="GO" id="GO:0016765">
    <property type="term" value="F:transferase activity, transferring alkyl or aryl (other than methyl) groups"/>
    <property type="evidence" value="ECO:0007669"/>
    <property type="project" value="InterPro"/>
</dbReference>
<dbReference type="CDD" id="cd01335">
    <property type="entry name" value="Radical_SAM"/>
    <property type="match status" value="1"/>
</dbReference>
<dbReference type="Gene3D" id="3.20.20.70">
    <property type="entry name" value="Aldolase class I"/>
    <property type="match status" value="1"/>
</dbReference>
<dbReference type="HAMAP" id="MF_01611">
    <property type="entry name" value="FO_synth_sub1"/>
    <property type="match status" value="1"/>
</dbReference>
<dbReference type="InterPro" id="IPR013785">
    <property type="entry name" value="Aldolase_TIM"/>
</dbReference>
<dbReference type="InterPro" id="IPR019939">
    <property type="entry name" value="CofG_family"/>
</dbReference>
<dbReference type="InterPro" id="IPR006638">
    <property type="entry name" value="Elp3/MiaA/NifB-like_rSAM"/>
</dbReference>
<dbReference type="InterPro" id="IPR034405">
    <property type="entry name" value="F420"/>
</dbReference>
<dbReference type="InterPro" id="IPR007197">
    <property type="entry name" value="rSAM"/>
</dbReference>
<dbReference type="NCBIfam" id="TIGR03550">
    <property type="entry name" value="F420_cofG"/>
    <property type="match status" value="1"/>
</dbReference>
<dbReference type="NCBIfam" id="NF004884">
    <property type="entry name" value="PRK06245.1"/>
    <property type="match status" value="1"/>
</dbReference>
<dbReference type="PANTHER" id="PTHR43076:SF15">
    <property type="entry name" value="7,8-DIDEMETHYL-8-HYDROXY-5-DEAZARIBOFLAVIN SYNTHASE"/>
    <property type="match status" value="1"/>
</dbReference>
<dbReference type="PANTHER" id="PTHR43076">
    <property type="entry name" value="FO SYNTHASE (COFH)"/>
    <property type="match status" value="1"/>
</dbReference>
<dbReference type="Pfam" id="PF04055">
    <property type="entry name" value="Radical_SAM"/>
    <property type="match status" value="1"/>
</dbReference>
<dbReference type="SFLD" id="SFLDF00294">
    <property type="entry name" value="7_8-didemethyl-8-hydroxy-5-dea"/>
    <property type="match status" value="1"/>
</dbReference>
<dbReference type="SFLD" id="SFLDG01064">
    <property type="entry name" value="F420__menaquinone_cofactor_bio"/>
    <property type="match status" value="1"/>
</dbReference>
<dbReference type="SMART" id="SM00729">
    <property type="entry name" value="Elp3"/>
    <property type="match status" value="1"/>
</dbReference>
<dbReference type="SUPFAM" id="SSF102114">
    <property type="entry name" value="Radical SAM enzymes"/>
    <property type="match status" value="1"/>
</dbReference>
<dbReference type="PROSITE" id="PS51918">
    <property type="entry name" value="RADICAL_SAM"/>
    <property type="match status" value="1"/>
</dbReference>
<name>COFG_META3</name>
<proteinExistence type="inferred from homology"/>
<comment type="function">
    <text evidence="1">Catalyzes the radical-mediated synthesis of 7,8-didemethyl-8-hydroxy-5-deazariboflavin from 5-amino-5-(4-hydroxybenzyl)-6-(D-ribitylimino)-5,6-dihydrouracil.</text>
</comment>
<comment type="catalytic activity">
    <reaction evidence="1">
        <text>5-amino-5-(4-hydroxybenzyl)-6-(D-ribitylimino)-5,6-dihydrouracil + S-adenosyl-L-methionine = 7,8-didemethyl-8-hydroxy-5-deazariboflavin + 5'-deoxyadenosine + L-methionine + NH4(+) + H(+)</text>
        <dbReference type="Rhea" id="RHEA:55204"/>
        <dbReference type="ChEBI" id="CHEBI:15378"/>
        <dbReference type="ChEBI" id="CHEBI:17319"/>
        <dbReference type="ChEBI" id="CHEBI:28938"/>
        <dbReference type="ChEBI" id="CHEBI:57844"/>
        <dbReference type="ChEBI" id="CHEBI:59789"/>
        <dbReference type="ChEBI" id="CHEBI:59904"/>
        <dbReference type="ChEBI" id="CHEBI:85936"/>
        <dbReference type="EC" id="4.3.1.32"/>
    </reaction>
</comment>
<comment type="cofactor">
    <cofactor evidence="1">
        <name>[4Fe-4S] cluster</name>
        <dbReference type="ChEBI" id="CHEBI:49883"/>
    </cofactor>
    <text evidence="1">Binds 1 [4Fe-4S] cluster. The cluster is coordinated with 3 cysteines and an exchangeable S-adenosyl-L-methionine.</text>
</comment>
<comment type="pathway">
    <text evidence="1">Cofactor biosynthesis; coenzyme F0 biosynthesis.</text>
</comment>
<comment type="subunit">
    <text evidence="1">Consists of two subunits, CofG and CofH.</text>
</comment>
<comment type="similarity">
    <text evidence="1">Belongs to the radical SAM superfamily. CofG family.</text>
</comment>
<comment type="sequence caution" evidence="3">
    <conflict type="erroneous initiation">
        <sequence resource="EMBL-CDS" id="ABR56492"/>
    </conflict>
</comment>
<reference key="1">
    <citation type="submission" date="2007-06" db="EMBL/GenBank/DDBJ databases">
        <title>Complete sequence of Methanococcus aeolicus Nankai-3.</title>
        <authorList>
            <consortium name="US DOE Joint Genome Institute"/>
            <person name="Copeland A."/>
            <person name="Lucas S."/>
            <person name="Lapidus A."/>
            <person name="Barry K."/>
            <person name="Glavina del Rio T."/>
            <person name="Dalin E."/>
            <person name="Tice H."/>
            <person name="Pitluck S."/>
            <person name="Chain P."/>
            <person name="Malfatti S."/>
            <person name="Shin M."/>
            <person name="Vergez L."/>
            <person name="Schmutz J."/>
            <person name="Larimer F."/>
            <person name="Land M."/>
            <person name="Hauser L."/>
            <person name="Kyrpides N."/>
            <person name="Lykidis A."/>
            <person name="Sieprawska-Lupa M."/>
            <person name="Whitman W.B."/>
            <person name="Richardson P."/>
        </authorList>
    </citation>
    <scope>NUCLEOTIDE SEQUENCE [LARGE SCALE GENOMIC DNA]</scope>
    <source>
        <strain>ATCC BAA-1280 / DSM 17508 / OCM 812 / Nankai-3</strain>
    </source>
</reference>
<gene>
    <name evidence="1" type="primary">cofG</name>
    <name type="ordered locus">Maeo_0911</name>
</gene>
<keyword id="KW-0004">4Fe-4S</keyword>
<keyword id="KW-0408">Iron</keyword>
<keyword id="KW-0411">Iron-sulfur</keyword>
<keyword id="KW-0456">Lyase</keyword>
<keyword id="KW-0479">Metal-binding</keyword>
<keyword id="KW-0949">S-adenosyl-L-methionine</keyword>
<organism>
    <name type="scientific">Methanococcus aeolicus (strain ATCC BAA-1280 / DSM 17508 / OCM 812 / Nankai-3)</name>
    <dbReference type="NCBI Taxonomy" id="419665"/>
    <lineage>
        <taxon>Archaea</taxon>
        <taxon>Methanobacteriati</taxon>
        <taxon>Methanobacteriota</taxon>
        <taxon>Methanomada group</taxon>
        <taxon>Methanococci</taxon>
        <taxon>Methanococcales</taxon>
        <taxon>Methanococcaceae</taxon>
        <taxon>Methanococcus</taxon>
    </lineage>
</organism>
<sequence>MVEFLNSKNPQDIIDKLSLINNNGNKNIGNGNKTNNKKYITYSKNVFIPICNWCKNICGYCTFRRENYKLMNKQEIKEILLTGNKHGCREALFTFGETVDENPKIKEDLKKMGYNNILEYLYDISDWCLTNTDLLPHTNCGILSYEELKTLKEVNASMGLMLENSSDRLYNTIAHKDSPGKEPKKRLKMIEDAGKLKIPFTTGILVGIGETNEEIVQSLVDINNIHKKYGHIQEVIIQNFRAKESIPMSNYEEPTPLKMLKVLIVAKLILKDISIQVPPNLNSETGQLFLFAGVDDWGGVSPITKDFVNPEAPWPKIEELKKYTEEFGYSLKERLPVYEKYINENWLSCKVLEKIK</sequence>
<protein>
    <recommendedName>
        <fullName evidence="1">7,8-didemethyl-8-hydroxy-5-deazariboflavin synthase</fullName>
        <ecNumber evidence="1">4.3.1.32</ecNumber>
    </recommendedName>
    <alternativeName>
        <fullName evidence="1">FO synthase subunit 1</fullName>
    </alternativeName>
</protein>
<accession>A6UVH0</accession>